<organism>
    <name type="scientific">Mycobacterium tuberculosis (strain CDC 1551 / Oshkosh)</name>
    <dbReference type="NCBI Taxonomy" id="83331"/>
    <lineage>
        <taxon>Bacteria</taxon>
        <taxon>Bacillati</taxon>
        <taxon>Actinomycetota</taxon>
        <taxon>Actinomycetes</taxon>
        <taxon>Mycobacteriales</taxon>
        <taxon>Mycobacteriaceae</taxon>
        <taxon>Mycobacterium</taxon>
        <taxon>Mycobacterium tuberculosis complex</taxon>
    </lineage>
</organism>
<proteinExistence type="inferred from homology"/>
<dbReference type="EC" id="4.2.1.17"/>
<dbReference type="EMBL" id="AE000516">
    <property type="protein sequence ID" value="AAK46864.1"/>
    <property type="molecule type" value="Genomic_DNA"/>
</dbReference>
<dbReference type="PIR" id="E70868">
    <property type="entry name" value="E70868"/>
</dbReference>
<dbReference type="RefSeq" id="WP_003412728.1">
    <property type="nucleotide sequence ID" value="NZ_KK341227.1"/>
</dbReference>
<dbReference type="SMR" id="P9WNN4"/>
<dbReference type="KEGG" id="mtc:MT2560"/>
<dbReference type="PATRIC" id="fig|83331.31.peg.2762"/>
<dbReference type="HOGENOM" id="CLU_009834_7_2_11"/>
<dbReference type="Proteomes" id="UP000001020">
    <property type="component" value="Chromosome"/>
</dbReference>
<dbReference type="GO" id="GO:0004300">
    <property type="term" value="F:enoyl-CoA hydratase activity"/>
    <property type="evidence" value="ECO:0007669"/>
    <property type="project" value="UniProtKB-EC"/>
</dbReference>
<dbReference type="GO" id="GO:0006631">
    <property type="term" value="P:fatty acid metabolic process"/>
    <property type="evidence" value="ECO:0007669"/>
    <property type="project" value="UniProtKB-KW"/>
</dbReference>
<dbReference type="CDD" id="cd06558">
    <property type="entry name" value="crotonase-like"/>
    <property type="match status" value="1"/>
</dbReference>
<dbReference type="FunFam" id="3.90.226.10:FF:000096">
    <property type="entry name" value="Enoyl-CoA hydratase EchA14"/>
    <property type="match status" value="1"/>
</dbReference>
<dbReference type="Gene3D" id="3.90.226.10">
    <property type="entry name" value="2-enoyl-CoA Hydratase, Chain A, domain 1"/>
    <property type="match status" value="1"/>
</dbReference>
<dbReference type="InterPro" id="IPR029045">
    <property type="entry name" value="ClpP/crotonase-like_dom_sf"/>
</dbReference>
<dbReference type="InterPro" id="IPR018376">
    <property type="entry name" value="Enoyl-CoA_hyd/isom_CS"/>
</dbReference>
<dbReference type="InterPro" id="IPR001753">
    <property type="entry name" value="Enoyl-CoA_hydra/iso"/>
</dbReference>
<dbReference type="NCBIfam" id="NF004525">
    <property type="entry name" value="PRK05870.1"/>
    <property type="match status" value="1"/>
</dbReference>
<dbReference type="PANTHER" id="PTHR43802">
    <property type="entry name" value="ENOYL-COA HYDRATASE"/>
    <property type="match status" value="1"/>
</dbReference>
<dbReference type="PANTHER" id="PTHR43802:SF1">
    <property type="entry name" value="IP11341P-RELATED"/>
    <property type="match status" value="1"/>
</dbReference>
<dbReference type="Pfam" id="PF00378">
    <property type="entry name" value="ECH_1"/>
    <property type="match status" value="1"/>
</dbReference>
<dbReference type="SUPFAM" id="SSF52096">
    <property type="entry name" value="ClpP/crotonase"/>
    <property type="match status" value="1"/>
</dbReference>
<dbReference type="PROSITE" id="PS00166">
    <property type="entry name" value="ENOYL_COA_HYDRATASE"/>
    <property type="match status" value="1"/>
</dbReference>
<accession>P9WNN4</accession>
<accession>L0T9S3</accession>
<accession>O53211</accession>
<accession>P64018</accession>
<reference key="1">
    <citation type="journal article" date="2002" name="J. Bacteriol.">
        <title>Whole-genome comparison of Mycobacterium tuberculosis clinical and laboratory strains.</title>
        <authorList>
            <person name="Fleischmann R.D."/>
            <person name="Alland D."/>
            <person name="Eisen J.A."/>
            <person name="Carpenter L."/>
            <person name="White O."/>
            <person name="Peterson J.D."/>
            <person name="DeBoy R.T."/>
            <person name="Dodson R.J."/>
            <person name="Gwinn M.L."/>
            <person name="Haft D.H."/>
            <person name="Hickey E.K."/>
            <person name="Kolonay J.F."/>
            <person name="Nelson W.C."/>
            <person name="Umayam L.A."/>
            <person name="Ermolaeva M.D."/>
            <person name="Salzberg S.L."/>
            <person name="Delcher A."/>
            <person name="Utterback T.R."/>
            <person name="Weidman J.F."/>
            <person name="Khouri H.M."/>
            <person name="Gill J."/>
            <person name="Mikula A."/>
            <person name="Bishai W."/>
            <person name="Jacobs W.R. Jr."/>
            <person name="Venter J.C."/>
            <person name="Fraser C.M."/>
        </authorList>
    </citation>
    <scope>NUCLEOTIDE SEQUENCE [LARGE SCALE GENOMIC DNA]</scope>
    <source>
        <strain>CDC 1551 / Oshkosh</strain>
    </source>
</reference>
<sequence>MAQYDPVLLSVDKHVALITVNDPDRRNAVTDEMSAQLRAAIQRAEGDPDVHAVVVTGAGKAFCAGADLSALGAGVGDPAEPRLLRLYDGFMAVSSCNLPTIAAVNGAAVGAGLNLALAADVRIAGPAALFDARFQKLGLHPGGGATWMLQRAVGPQVARAALLFGMCFDAESAVRHGLALMVADDPVTAALELAAGPAAAPREVVLASKATMRATASPGSLDLEQHELAKRLELGPQAKSVQSPEFAARLAAAQHR</sequence>
<keyword id="KW-0276">Fatty acid metabolism</keyword>
<keyword id="KW-0443">Lipid metabolism</keyword>
<keyword id="KW-0456">Lyase</keyword>
<keyword id="KW-1185">Reference proteome</keyword>
<protein>
    <recommendedName>
        <fullName>Probable enoyl-CoA hydratase echA14</fullName>
        <ecNumber>4.2.1.17</ecNumber>
    </recommendedName>
</protein>
<gene>
    <name type="primary">echA14</name>
    <name type="ordered locus">MT2560</name>
</gene>
<evidence type="ECO:0000250" key="1"/>
<evidence type="ECO:0000256" key="2">
    <source>
        <dbReference type="SAM" id="MobiDB-lite"/>
    </source>
</evidence>
<evidence type="ECO:0000305" key="3"/>
<feature type="chain" id="PRO_0000427096" description="Probable enoyl-CoA hydratase echA14">
    <location>
        <begin position="1"/>
        <end position="256"/>
    </location>
</feature>
<feature type="region of interest" description="Disordered" evidence="2">
    <location>
        <begin position="235"/>
        <end position="256"/>
    </location>
</feature>
<comment type="function">
    <text evidence="1">Could possibly oxidize fatty acids using specific components.</text>
</comment>
<comment type="catalytic activity">
    <reaction>
        <text>a (3S)-3-hydroxyacyl-CoA = a (2E)-enoyl-CoA + H2O</text>
        <dbReference type="Rhea" id="RHEA:16105"/>
        <dbReference type="ChEBI" id="CHEBI:15377"/>
        <dbReference type="ChEBI" id="CHEBI:57318"/>
        <dbReference type="ChEBI" id="CHEBI:58856"/>
        <dbReference type="EC" id="4.2.1.17"/>
    </reaction>
</comment>
<comment type="catalytic activity">
    <reaction>
        <text>a 4-saturated-(3S)-3-hydroxyacyl-CoA = a (3E)-enoyl-CoA + H2O</text>
        <dbReference type="Rhea" id="RHEA:20724"/>
        <dbReference type="ChEBI" id="CHEBI:15377"/>
        <dbReference type="ChEBI" id="CHEBI:58521"/>
        <dbReference type="ChEBI" id="CHEBI:137480"/>
        <dbReference type="EC" id="4.2.1.17"/>
    </reaction>
</comment>
<comment type="similarity">
    <text evidence="3">Belongs to the enoyl-CoA hydratase/isomerase family.</text>
</comment>
<name>ECH14_MYCTO</name>